<comment type="similarity">
    <text evidence="1">Belongs to the UPF0270 family.</text>
</comment>
<protein>
    <recommendedName>
        <fullName evidence="1">UPF0270 protein PM1156</fullName>
    </recommendedName>
</protein>
<organism>
    <name type="scientific">Pasteurella multocida (strain Pm70)</name>
    <dbReference type="NCBI Taxonomy" id="272843"/>
    <lineage>
        <taxon>Bacteria</taxon>
        <taxon>Pseudomonadati</taxon>
        <taxon>Pseudomonadota</taxon>
        <taxon>Gammaproteobacteria</taxon>
        <taxon>Pasteurellales</taxon>
        <taxon>Pasteurellaceae</taxon>
        <taxon>Pasteurella</taxon>
    </lineage>
</organism>
<accession>Q9CLQ8</accession>
<name>Y1156_PASMU</name>
<feature type="chain" id="PRO_0000214852" description="UPF0270 protein PM1156">
    <location>
        <begin position="1"/>
        <end position="72"/>
    </location>
</feature>
<reference key="1">
    <citation type="journal article" date="2001" name="Proc. Natl. Acad. Sci. U.S.A.">
        <title>Complete genomic sequence of Pasteurella multocida Pm70.</title>
        <authorList>
            <person name="May B.J."/>
            <person name="Zhang Q."/>
            <person name="Li L.L."/>
            <person name="Paustian M.L."/>
            <person name="Whittam T.S."/>
            <person name="Kapur V."/>
        </authorList>
    </citation>
    <scope>NUCLEOTIDE SEQUENCE [LARGE SCALE GENOMIC DNA]</scope>
    <source>
        <strain>Pm70</strain>
    </source>
</reference>
<keyword id="KW-1185">Reference proteome</keyword>
<dbReference type="EMBL" id="AE004439">
    <property type="protein sequence ID" value="AAK03240.1"/>
    <property type="molecule type" value="Genomic_DNA"/>
</dbReference>
<dbReference type="RefSeq" id="WP_005733942.1">
    <property type="nucleotide sequence ID" value="NC_002663.1"/>
</dbReference>
<dbReference type="SMR" id="Q9CLQ8"/>
<dbReference type="STRING" id="272843.PM1156"/>
<dbReference type="EnsemblBacteria" id="AAK03240">
    <property type="protein sequence ID" value="AAK03240"/>
    <property type="gene ID" value="PM1156"/>
</dbReference>
<dbReference type="KEGG" id="pmu:PM1156"/>
<dbReference type="HOGENOM" id="CLU_186759_1_0_6"/>
<dbReference type="OrthoDB" id="6120729at2"/>
<dbReference type="Proteomes" id="UP000000809">
    <property type="component" value="Chromosome"/>
</dbReference>
<dbReference type="Gene3D" id="1.10.10.610">
    <property type="entry name" value="YehU-like"/>
    <property type="match status" value="1"/>
</dbReference>
<dbReference type="HAMAP" id="MF_00690">
    <property type="entry name" value="UPF0270"/>
    <property type="match status" value="1"/>
</dbReference>
<dbReference type="InterPro" id="IPR010648">
    <property type="entry name" value="UPF0270"/>
</dbReference>
<dbReference type="InterPro" id="IPR036685">
    <property type="entry name" value="YehU-like_sf"/>
</dbReference>
<dbReference type="NCBIfam" id="NF003438">
    <property type="entry name" value="PRK04966.1"/>
    <property type="match status" value="1"/>
</dbReference>
<dbReference type="Pfam" id="PF06794">
    <property type="entry name" value="UPF0270"/>
    <property type="match status" value="1"/>
</dbReference>
<dbReference type="PIRSF" id="PIRSF006169">
    <property type="entry name" value="UCP006169"/>
    <property type="match status" value="1"/>
</dbReference>
<dbReference type="SUPFAM" id="SSF118001">
    <property type="entry name" value="YehU-like"/>
    <property type="match status" value="1"/>
</dbReference>
<sequence>MIIPWQELEEETLNNIVESFILREGTDYGQCELSLEQKKQALLSQIQQGTVVIVWSELHESIDIKDKMDLLK</sequence>
<gene>
    <name type="ordered locus">PM1156</name>
</gene>
<evidence type="ECO:0000255" key="1">
    <source>
        <dbReference type="HAMAP-Rule" id="MF_00690"/>
    </source>
</evidence>
<proteinExistence type="inferred from homology"/>